<name>DUSTY_HUMAN</name>
<gene>
    <name type="primary">DSTYK</name>
    <name type="synonym">KIAA0472</name>
    <name type="synonym">RIP5</name>
    <name type="synonym">RIPK5</name>
    <name type="synonym">SGK496</name>
    <name type="ORF">HDCMD38P</name>
</gene>
<dbReference type="EC" id="2.7.12.1"/>
<dbReference type="EMBL" id="AY208850">
    <property type="protein sequence ID" value="AAP42418.1"/>
    <property type="molecule type" value="mRNA"/>
</dbReference>
<dbReference type="EMBL" id="AY429674">
    <property type="protein sequence ID" value="AAS55390.1"/>
    <property type="molecule type" value="mRNA"/>
</dbReference>
<dbReference type="EMBL" id="AF068286">
    <property type="protein sequence ID" value="AAF65505.1"/>
    <property type="molecule type" value="mRNA"/>
</dbReference>
<dbReference type="EMBL" id="AC093422">
    <property type="status" value="NOT_ANNOTATED_CDS"/>
    <property type="molecule type" value="Genomic_DNA"/>
</dbReference>
<dbReference type="EMBL" id="BC048204">
    <property type="protein sequence ID" value="AAH48204.1"/>
    <property type="molecule type" value="mRNA"/>
</dbReference>
<dbReference type="EMBL" id="BC053627">
    <property type="protein sequence ID" value="AAH53627.1"/>
    <property type="molecule type" value="mRNA"/>
</dbReference>
<dbReference type="EMBL" id="BC060870">
    <property type="protein sequence ID" value="AAH60870.2"/>
    <property type="molecule type" value="mRNA"/>
</dbReference>
<dbReference type="EMBL" id="BC072406">
    <property type="protein sequence ID" value="AAH72406.1"/>
    <property type="molecule type" value="mRNA"/>
</dbReference>
<dbReference type="EMBL" id="BC117411">
    <property type="protein sequence ID" value="AAI17412.1"/>
    <property type="molecule type" value="mRNA"/>
</dbReference>
<dbReference type="EMBL" id="BC143603">
    <property type="protein sequence ID" value="AAI43604.1"/>
    <property type="molecule type" value="mRNA"/>
</dbReference>
<dbReference type="EMBL" id="AB007941">
    <property type="protein sequence ID" value="BAA32317.1"/>
    <property type="molecule type" value="mRNA"/>
</dbReference>
<dbReference type="CCDS" id="CCDS1451.1">
    <molecule id="Q6XUX3-1"/>
</dbReference>
<dbReference type="CCDS" id="CCDS1452.1">
    <molecule id="Q6XUX3-2"/>
</dbReference>
<dbReference type="RefSeq" id="NP_056190.1">
    <molecule id="Q6XUX3-1"/>
    <property type="nucleotide sequence ID" value="NM_015375.3"/>
</dbReference>
<dbReference type="RefSeq" id="NP_955749.1">
    <molecule id="Q6XUX3-2"/>
    <property type="nucleotide sequence ID" value="NM_199462.3"/>
</dbReference>
<dbReference type="SMR" id="Q6XUX3"/>
<dbReference type="BioGRID" id="117313">
    <property type="interactions" value="69"/>
</dbReference>
<dbReference type="FunCoup" id="Q6XUX3">
    <property type="interactions" value="1224"/>
</dbReference>
<dbReference type="IntAct" id="Q6XUX3">
    <property type="interactions" value="51"/>
</dbReference>
<dbReference type="STRING" id="9606.ENSP00000356130"/>
<dbReference type="BindingDB" id="Q6XUX3"/>
<dbReference type="ChEMBL" id="CHEMBL1908386"/>
<dbReference type="DrugCentral" id="Q6XUX3"/>
<dbReference type="GlyGen" id="Q6XUX3">
    <property type="glycosylation" value="1 site, 1 O-linked glycan (1 site)"/>
</dbReference>
<dbReference type="iPTMnet" id="Q6XUX3"/>
<dbReference type="PhosphoSitePlus" id="Q6XUX3"/>
<dbReference type="BioMuta" id="DSTYK"/>
<dbReference type="DMDM" id="296434486"/>
<dbReference type="CPTAC" id="non-CPTAC-6022"/>
<dbReference type="CPTAC" id="non-CPTAC-6023"/>
<dbReference type="jPOST" id="Q6XUX3"/>
<dbReference type="MassIVE" id="Q6XUX3"/>
<dbReference type="PaxDb" id="9606-ENSP00000356130"/>
<dbReference type="PeptideAtlas" id="Q6XUX3"/>
<dbReference type="ProteomicsDB" id="67816">
    <molecule id="Q6XUX3-1"/>
</dbReference>
<dbReference type="ProteomicsDB" id="67817">
    <molecule id="Q6XUX3-2"/>
</dbReference>
<dbReference type="ProteomicsDB" id="67818">
    <molecule id="Q6XUX3-3"/>
</dbReference>
<dbReference type="ProteomicsDB" id="67819">
    <molecule id="Q6XUX3-4"/>
</dbReference>
<dbReference type="Pumba" id="Q6XUX3"/>
<dbReference type="Antibodypedia" id="34564">
    <property type="antibodies" value="193 antibodies from 26 providers"/>
</dbReference>
<dbReference type="DNASU" id="25778"/>
<dbReference type="Ensembl" id="ENST00000367161.7">
    <molecule id="Q6XUX3-2"/>
    <property type="protein sequence ID" value="ENSP00000356129.3"/>
    <property type="gene ID" value="ENSG00000133059.18"/>
</dbReference>
<dbReference type="Ensembl" id="ENST00000367162.8">
    <molecule id="Q6XUX3-1"/>
    <property type="protein sequence ID" value="ENSP00000356130.3"/>
    <property type="gene ID" value="ENSG00000133059.18"/>
</dbReference>
<dbReference type="GeneID" id="25778"/>
<dbReference type="KEGG" id="hsa:25778"/>
<dbReference type="MANE-Select" id="ENST00000367162.8">
    <property type="protein sequence ID" value="ENSP00000356130.3"/>
    <property type="RefSeq nucleotide sequence ID" value="NM_015375.3"/>
    <property type="RefSeq protein sequence ID" value="NP_056190.1"/>
</dbReference>
<dbReference type="UCSC" id="uc001hbw.4">
    <molecule id="Q6XUX3-1"/>
    <property type="organism name" value="human"/>
</dbReference>
<dbReference type="AGR" id="HGNC:29043"/>
<dbReference type="CTD" id="25778"/>
<dbReference type="DisGeNET" id="25778"/>
<dbReference type="GeneCards" id="DSTYK"/>
<dbReference type="HGNC" id="HGNC:29043">
    <property type="gene designation" value="DSTYK"/>
</dbReference>
<dbReference type="HPA" id="ENSG00000133059">
    <property type="expression patterns" value="Low tissue specificity"/>
</dbReference>
<dbReference type="MalaCards" id="DSTYK"/>
<dbReference type="MIM" id="270750">
    <property type="type" value="phenotype"/>
</dbReference>
<dbReference type="MIM" id="610805">
    <property type="type" value="phenotype"/>
</dbReference>
<dbReference type="MIM" id="612666">
    <property type="type" value="gene"/>
</dbReference>
<dbReference type="neXtProt" id="NX_Q6XUX3"/>
<dbReference type="OpenTargets" id="ENSG00000133059"/>
<dbReference type="Orphanet" id="101003">
    <property type="disease" value="Autosomal recessive spastic paraplegia type 23"/>
</dbReference>
<dbReference type="Orphanet" id="93100">
    <property type="disease" value="Renal agenesis, unilateral"/>
</dbReference>
<dbReference type="PharmGKB" id="PA164718861"/>
<dbReference type="VEuPathDB" id="HostDB:ENSG00000133059"/>
<dbReference type="eggNOG" id="KOG0192">
    <property type="taxonomic scope" value="Eukaryota"/>
</dbReference>
<dbReference type="GeneTree" id="ENSGT00840000129948"/>
<dbReference type="HOGENOM" id="CLU_014116_0_0_1"/>
<dbReference type="InParanoid" id="Q6XUX3"/>
<dbReference type="OMA" id="VTRMVWE"/>
<dbReference type="OrthoDB" id="122279at2759"/>
<dbReference type="PAN-GO" id="Q6XUX3">
    <property type="GO annotations" value="5 GO annotations based on evolutionary models"/>
</dbReference>
<dbReference type="PhylomeDB" id="Q6XUX3"/>
<dbReference type="TreeFam" id="TF331821"/>
<dbReference type="PathwayCommons" id="Q6XUX3"/>
<dbReference type="SignaLink" id="Q6XUX3"/>
<dbReference type="BioGRID-ORCS" id="25778">
    <property type="hits" value="25 hits in 1197 CRISPR screens"/>
</dbReference>
<dbReference type="ChiTaRS" id="DSTYK">
    <property type="organism name" value="human"/>
</dbReference>
<dbReference type="GeneWiki" id="RIPK5"/>
<dbReference type="GenomeRNAi" id="25778"/>
<dbReference type="Pharos" id="Q6XUX3">
    <property type="development level" value="Tchem"/>
</dbReference>
<dbReference type="PRO" id="PR:Q6XUX3"/>
<dbReference type="Proteomes" id="UP000005640">
    <property type="component" value="Chromosome 1"/>
</dbReference>
<dbReference type="RNAct" id="Q6XUX3">
    <property type="molecule type" value="protein"/>
</dbReference>
<dbReference type="Bgee" id="ENSG00000133059">
    <property type="expression patterns" value="Expressed in lateral nuclear group of thalamus and 215 other cell types or tissues"/>
</dbReference>
<dbReference type="GO" id="GO:0070161">
    <property type="term" value="C:anchoring junction"/>
    <property type="evidence" value="ECO:0007669"/>
    <property type="project" value="UniProtKB-SubCell"/>
</dbReference>
<dbReference type="GO" id="GO:0016324">
    <property type="term" value="C:apical plasma membrane"/>
    <property type="evidence" value="ECO:0000314"/>
    <property type="project" value="UniProtKB"/>
</dbReference>
<dbReference type="GO" id="GO:0016323">
    <property type="term" value="C:basolateral plasma membrane"/>
    <property type="evidence" value="ECO:0000314"/>
    <property type="project" value="UniProtKB"/>
</dbReference>
<dbReference type="GO" id="GO:0005737">
    <property type="term" value="C:cytoplasm"/>
    <property type="evidence" value="ECO:0000314"/>
    <property type="project" value="UniProtKB"/>
</dbReference>
<dbReference type="GO" id="GO:0005524">
    <property type="term" value="F:ATP binding"/>
    <property type="evidence" value="ECO:0007669"/>
    <property type="project" value="UniProtKB-KW"/>
</dbReference>
<dbReference type="GO" id="GO:0106310">
    <property type="term" value="F:protein serine kinase activity"/>
    <property type="evidence" value="ECO:0007669"/>
    <property type="project" value="RHEA"/>
</dbReference>
<dbReference type="GO" id="GO:0004674">
    <property type="term" value="F:protein serine/threonine kinase activity"/>
    <property type="evidence" value="ECO:0007669"/>
    <property type="project" value="UniProtKB-KW"/>
</dbReference>
<dbReference type="GO" id="GO:0004712">
    <property type="term" value="F:protein serine/threonine/tyrosine kinase activity"/>
    <property type="evidence" value="ECO:0007669"/>
    <property type="project" value="UniProtKB-EC"/>
</dbReference>
<dbReference type="GO" id="GO:0004713">
    <property type="term" value="F:protein tyrosine kinase activity"/>
    <property type="evidence" value="ECO:0007669"/>
    <property type="project" value="UniProtKB-KW"/>
</dbReference>
<dbReference type="GO" id="GO:0044344">
    <property type="term" value="P:cellular response to fibroblast growth factor stimulus"/>
    <property type="evidence" value="ECO:0000314"/>
    <property type="project" value="UniProtKB"/>
</dbReference>
<dbReference type="GO" id="GO:0043066">
    <property type="term" value="P:negative regulation of apoptotic process"/>
    <property type="evidence" value="ECO:0000315"/>
    <property type="project" value="UniProtKB"/>
</dbReference>
<dbReference type="GO" id="GO:0070374">
    <property type="term" value="P:positive regulation of ERK1 and ERK2 cascade"/>
    <property type="evidence" value="ECO:0000315"/>
    <property type="project" value="UniProtKB"/>
</dbReference>
<dbReference type="GO" id="GO:0045743">
    <property type="term" value="P:positive regulation of fibroblast growth factor receptor signaling pathway"/>
    <property type="evidence" value="ECO:0000315"/>
    <property type="project" value="UniProtKB"/>
</dbReference>
<dbReference type="GO" id="GO:0033674">
    <property type="term" value="P:positive regulation of kinase activity"/>
    <property type="evidence" value="ECO:0000315"/>
    <property type="project" value="UniProtKB"/>
</dbReference>
<dbReference type="CDD" id="cd13975">
    <property type="entry name" value="PKc_Dusty"/>
    <property type="match status" value="1"/>
</dbReference>
<dbReference type="FunFam" id="1.10.510.10:FF:000244">
    <property type="entry name" value="Dual serine/threonine and tyrosine protein kinase"/>
    <property type="match status" value="1"/>
</dbReference>
<dbReference type="Gene3D" id="1.10.510.10">
    <property type="entry name" value="Transferase(Phosphotransferase) domain 1"/>
    <property type="match status" value="1"/>
</dbReference>
<dbReference type="InterPro" id="IPR051302">
    <property type="entry name" value="Dual_SerThr-Tyr_Kinase"/>
</dbReference>
<dbReference type="InterPro" id="IPR011009">
    <property type="entry name" value="Kinase-like_dom_sf"/>
</dbReference>
<dbReference type="InterPro" id="IPR000719">
    <property type="entry name" value="Prot_kinase_dom"/>
</dbReference>
<dbReference type="InterPro" id="IPR017441">
    <property type="entry name" value="Protein_kinase_ATP_BS"/>
</dbReference>
<dbReference type="InterPro" id="IPR008271">
    <property type="entry name" value="Ser/Thr_kinase_AS"/>
</dbReference>
<dbReference type="PANTHER" id="PTHR46392">
    <property type="entry name" value="DUAL SERINE/THREONINE AND TYROSINE PROTEIN KINASE"/>
    <property type="match status" value="1"/>
</dbReference>
<dbReference type="PANTHER" id="PTHR46392:SF1">
    <property type="entry name" value="DUAL SERINE_THREONINE AND TYROSINE PROTEIN KINASE"/>
    <property type="match status" value="1"/>
</dbReference>
<dbReference type="Pfam" id="PF00069">
    <property type="entry name" value="Pkinase"/>
    <property type="match status" value="1"/>
</dbReference>
<dbReference type="SMART" id="SM00220">
    <property type="entry name" value="S_TKc"/>
    <property type="match status" value="1"/>
</dbReference>
<dbReference type="SUPFAM" id="SSF56112">
    <property type="entry name" value="Protein kinase-like (PK-like)"/>
    <property type="match status" value="1"/>
</dbReference>
<dbReference type="PROSITE" id="PS00107">
    <property type="entry name" value="PROTEIN_KINASE_ATP"/>
    <property type="match status" value="1"/>
</dbReference>
<dbReference type="PROSITE" id="PS50011">
    <property type="entry name" value="PROTEIN_KINASE_DOM"/>
    <property type="match status" value="1"/>
</dbReference>
<dbReference type="PROSITE" id="PS00108">
    <property type="entry name" value="PROTEIN_KINASE_ST"/>
    <property type="match status" value="1"/>
</dbReference>
<feature type="chain" id="PRO_0000233118" description="Dual serine/threonine and tyrosine protein kinase">
    <location>
        <begin position="1"/>
        <end position="929"/>
    </location>
</feature>
<feature type="domain" description="Protein kinase" evidence="3">
    <location>
        <begin position="652"/>
        <end position="906"/>
    </location>
</feature>
<feature type="region of interest" description="Disordered" evidence="5">
    <location>
        <begin position="1"/>
        <end position="21"/>
    </location>
</feature>
<feature type="coiled-coil region" evidence="2">
    <location>
        <begin position="189"/>
        <end position="215"/>
    </location>
</feature>
<feature type="coiled-coil region" evidence="2">
    <location>
        <begin position="395"/>
        <end position="431"/>
    </location>
</feature>
<feature type="compositionally biased region" description="Low complexity" evidence="5">
    <location>
        <begin position="1"/>
        <end position="14"/>
    </location>
</feature>
<feature type="active site" description="Proton acceptor" evidence="3 4">
    <location>
        <position position="777"/>
    </location>
</feature>
<feature type="binding site" evidence="3">
    <location>
        <begin position="658"/>
        <end position="666"/>
    </location>
    <ligand>
        <name>ATP</name>
        <dbReference type="ChEBI" id="CHEBI:30616"/>
    </ligand>
</feature>
<feature type="binding site" evidence="3">
    <location>
        <position position="681"/>
    </location>
    <ligand>
        <name>ATP</name>
        <dbReference type="ChEBI" id="CHEBI:30616"/>
    </ligand>
</feature>
<feature type="splice variant" id="VSP_018030" description="In isoform 4." evidence="11">
    <location>
        <begin position="1"/>
        <end position="539"/>
    </location>
</feature>
<feature type="splice variant" id="VSP_018031" description="In isoform 3." evidence="10">
    <location>
        <begin position="451"/>
        <end position="792"/>
    </location>
</feature>
<feature type="splice variant" id="VSP_018032" description="In isoform 4." evidence="11">
    <original>SLPKHERLVDLHGSVI</original>
    <variation>WVLASFISMRKIQRRI</variation>
    <location>
        <begin position="703"/>
        <end position="718"/>
    </location>
</feature>
<feature type="splice variant" id="VSP_018033" description="In isoform 4." evidence="11">
    <location>
        <begin position="719"/>
        <end position="929"/>
    </location>
</feature>
<feature type="splice variant" id="VSP_018034" description="In isoform 2." evidence="10">
    <location>
        <begin position="824"/>
        <end position="868"/>
    </location>
</feature>
<feature type="sequence variant" id="VAR_071324" description="In CAKUT1; uncertain significance; dbSNP:rs200780796." evidence="8">
    <original>R</original>
    <variation>Q</variation>
    <location>
        <position position="29"/>
    </location>
</feature>
<feature type="sequence variant" id="VAR_071325" description="In CAKUT1." evidence="8">
    <original>D</original>
    <variation>G</variation>
    <location>
        <position position="200"/>
    </location>
</feature>
<feature type="sequence variant" id="VAR_057101" description="In dbSNP:rs35845538.">
    <original>L</original>
    <variation>V</variation>
    <location>
        <position position="432"/>
    </location>
</feature>
<feature type="sequence variant" id="VAR_071326" description="In CAKUT1; dbSNP:rs778586547." evidence="8">
    <original>S</original>
    <variation>L</variation>
    <location>
        <position position="843"/>
    </location>
</feature>
<feature type="mutagenesis site" description="No change." evidence="6">
    <original>K</original>
    <variation>Q</variation>
    <location>
        <position position="681"/>
    </location>
</feature>
<feature type="sequence conflict" description="In Ref. 4; AAH72406." evidence="12" ref="4">
    <original>V</original>
    <variation>A</variation>
    <location>
        <position position="247"/>
    </location>
</feature>
<feature type="sequence conflict" description="In Ref. 4; AAH60870." evidence="12" ref="4">
    <original>G</original>
    <variation>R</variation>
    <location>
        <position position="449"/>
    </location>
</feature>
<feature type="sequence conflict" description="In Ref. 1; AAP42418/AAS55390, 2; AAF65505, 4; AAH53627/AAH72406/AAI17412/AAI43604 and 5; BAA32317." evidence="12" ref="1 2 4 5">
    <original>C</original>
    <variation>R</variation>
    <location>
        <position position="641"/>
    </location>
</feature>
<evidence type="ECO:0000250" key="1">
    <source>
        <dbReference type="UniProtKB" id="Q6XUX1"/>
    </source>
</evidence>
<evidence type="ECO:0000255" key="2"/>
<evidence type="ECO:0000255" key="3">
    <source>
        <dbReference type="PROSITE-ProRule" id="PRU00159"/>
    </source>
</evidence>
<evidence type="ECO:0000255" key="4">
    <source>
        <dbReference type="PROSITE-ProRule" id="PRU10027"/>
    </source>
</evidence>
<evidence type="ECO:0000256" key="5">
    <source>
        <dbReference type="SAM" id="MobiDB-lite"/>
    </source>
</evidence>
<evidence type="ECO:0000269" key="6">
    <source>
    </source>
</evidence>
<evidence type="ECO:0000269" key="7">
    <source>
    </source>
</evidence>
<evidence type="ECO:0000269" key="8">
    <source>
    </source>
</evidence>
<evidence type="ECO:0000269" key="9">
    <source>
    </source>
</evidence>
<evidence type="ECO:0000303" key="10">
    <source>
    </source>
</evidence>
<evidence type="ECO:0000303" key="11">
    <source ref="2"/>
</evidence>
<evidence type="ECO:0000305" key="12"/>
<reference key="1">
    <citation type="journal article" date="2006" name="Biochim. Biophys. Acta">
        <title>Dusty protein kinases: primary structure, gene evolution, tissue specific expression and unique features of the catalytic domain.</title>
        <authorList>
            <person name="Peng J."/>
            <person name="Dong W."/>
            <person name="Chen Y."/>
            <person name="Mo R."/>
            <person name="Cheng J.-F."/>
            <person name="Hui C.-C."/>
            <person name="Mohandas N."/>
            <person name="Huang C.-H."/>
        </authorList>
    </citation>
    <scope>NUCLEOTIDE SEQUENCE [MRNA] (ISOFORM 1)</scope>
    <scope>SUBCELLULAR LOCATION</scope>
    <scope>TISSUE SPECIFICITY</scope>
    <source>
        <tissue>Brain</tissue>
    </source>
</reference>
<reference key="2">
    <citation type="submission" date="1998-05" db="EMBL/GenBank/DDBJ databases">
        <title>A novel gene from human dendritic cell.</title>
        <authorList>
            <person name="Zhao Z."/>
            <person name="Huang X."/>
            <person name="Li N."/>
            <person name="Zhu X."/>
            <person name="Cao X."/>
        </authorList>
    </citation>
    <scope>NUCLEOTIDE SEQUENCE [LARGE SCALE MRNA] (ISOFORM 4)</scope>
    <source>
        <tissue>Dendritic cell</tissue>
    </source>
</reference>
<reference key="3">
    <citation type="journal article" date="2006" name="Nature">
        <title>The DNA sequence and biological annotation of human chromosome 1.</title>
        <authorList>
            <person name="Gregory S.G."/>
            <person name="Barlow K.F."/>
            <person name="McLay K.E."/>
            <person name="Kaul R."/>
            <person name="Swarbreck D."/>
            <person name="Dunham A."/>
            <person name="Scott C.E."/>
            <person name="Howe K.L."/>
            <person name="Woodfine K."/>
            <person name="Spencer C.C.A."/>
            <person name="Jones M.C."/>
            <person name="Gillson C."/>
            <person name="Searle S."/>
            <person name="Zhou Y."/>
            <person name="Kokocinski F."/>
            <person name="McDonald L."/>
            <person name="Evans R."/>
            <person name="Phillips K."/>
            <person name="Atkinson A."/>
            <person name="Cooper R."/>
            <person name="Jones C."/>
            <person name="Hall R.E."/>
            <person name="Andrews T.D."/>
            <person name="Lloyd C."/>
            <person name="Ainscough R."/>
            <person name="Almeida J.P."/>
            <person name="Ambrose K.D."/>
            <person name="Anderson F."/>
            <person name="Andrew R.W."/>
            <person name="Ashwell R.I.S."/>
            <person name="Aubin K."/>
            <person name="Babbage A.K."/>
            <person name="Bagguley C.L."/>
            <person name="Bailey J."/>
            <person name="Beasley H."/>
            <person name="Bethel G."/>
            <person name="Bird C.P."/>
            <person name="Bray-Allen S."/>
            <person name="Brown J.Y."/>
            <person name="Brown A.J."/>
            <person name="Buckley D."/>
            <person name="Burton J."/>
            <person name="Bye J."/>
            <person name="Carder C."/>
            <person name="Chapman J.C."/>
            <person name="Clark S.Y."/>
            <person name="Clarke G."/>
            <person name="Clee C."/>
            <person name="Cobley V."/>
            <person name="Collier R.E."/>
            <person name="Corby N."/>
            <person name="Coville G.J."/>
            <person name="Davies J."/>
            <person name="Deadman R."/>
            <person name="Dunn M."/>
            <person name="Earthrowl M."/>
            <person name="Ellington A.G."/>
            <person name="Errington H."/>
            <person name="Frankish A."/>
            <person name="Frankland J."/>
            <person name="French L."/>
            <person name="Garner P."/>
            <person name="Garnett J."/>
            <person name="Gay L."/>
            <person name="Ghori M.R.J."/>
            <person name="Gibson R."/>
            <person name="Gilby L.M."/>
            <person name="Gillett W."/>
            <person name="Glithero R.J."/>
            <person name="Grafham D.V."/>
            <person name="Griffiths C."/>
            <person name="Griffiths-Jones S."/>
            <person name="Grocock R."/>
            <person name="Hammond S."/>
            <person name="Harrison E.S.I."/>
            <person name="Hart E."/>
            <person name="Haugen E."/>
            <person name="Heath P.D."/>
            <person name="Holmes S."/>
            <person name="Holt K."/>
            <person name="Howden P.J."/>
            <person name="Hunt A.R."/>
            <person name="Hunt S.E."/>
            <person name="Hunter G."/>
            <person name="Isherwood J."/>
            <person name="James R."/>
            <person name="Johnson C."/>
            <person name="Johnson D."/>
            <person name="Joy A."/>
            <person name="Kay M."/>
            <person name="Kershaw J.K."/>
            <person name="Kibukawa M."/>
            <person name="Kimberley A.M."/>
            <person name="King A."/>
            <person name="Knights A.J."/>
            <person name="Lad H."/>
            <person name="Laird G."/>
            <person name="Lawlor S."/>
            <person name="Leongamornlert D.A."/>
            <person name="Lloyd D.M."/>
            <person name="Loveland J."/>
            <person name="Lovell J."/>
            <person name="Lush M.J."/>
            <person name="Lyne R."/>
            <person name="Martin S."/>
            <person name="Mashreghi-Mohammadi M."/>
            <person name="Matthews L."/>
            <person name="Matthews N.S.W."/>
            <person name="McLaren S."/>
            <person name="Milne S."/>
            <person name="Mistry S."/>
            <person name="Moore M.J.F."/>
            <person name="Nickerson T."/>
            <person name="O'Dell C.N."/>
            <person name="Oliver K."/>
            <person name="Palmeiri A."/>
            <person name="Palmer S.A."/>
            <person name="Parker A."/>
            <person name="Patel D."/>
            <person name="Pearce A.V."/>
            <person name="Peck A.I."/>
            <person name="Pelan S."/>
            <person name="Phelps K."/>
            <person name="Phillimore B.J."/>
            <person name="Plumb R."/>
            <person name="Rajan J."/>
            <person name="Raymond C."/>
            <person name="Rouse G."/>
            <person name="Saenphimmachak C."/>
            <person name="Sehra H.K."/>
            <person name="Sheridan E."/>
            <person name="Shownkeen R."/>
            <person name="Sims S."/>
            <person name="Skuce C.D."/>
            <person name="Smith M."/>
            <person name="Steward C."/>
            <person name="Subramanian S."/>
            <person name="Sycamore N."/>
            <person name="Tracey A."/>
            <person name="Tromans A."/>
            <person name="Van Helmond Z."/>
            <person name="Wall M."/>
            <person name="Wallis J.M."/>
            <person name="White S."/>
            <person name="Whitehead S.L."/>
            <person name="Wilkinson J.E."/>
            <person name="Willey D.L."/>
            <person name="Williams H."/>
            <person name="Wilming L."/>
            <person name="Wray P.W."/>
            <person name="Wu Z."/>
            <person name="Coulson A."/>
            <person name="Vaudin M."/>
            <person name="Sulston J.E."/>
            <person name="Durbin R.M."/>
            <person name="Hubbard T."/>
            <person name="Wooster R."/>
            <person name="Dunham I."/>
            <person name="Carter N.P."/>
            <person name="McVean G."/>
            <person name="Ross M.T."/>
            <person name="Harrow J."/>
            <person name="Olson M.V."/>
            <person name="Beck S."/>
            <person name="Rogers J."/>
            <person name="Bentley D.R."/>
        </authorList>
    </citation>
    <scope>NUCLEOTIDE SEQUENCE [LARGE SCALE GENOMIC DNA]</scope>
</reference>
<reference key="4">
    <citation type="journal article" date="2004" name="Genome Res.">
        <title>The status, quality, and expansion of the NIH full-length cDNA project: the Mammalian Gene Collection (MGC).</title>
        <authorList>
            <consortium name="The MGC Project Team"/>
        </authorList>
    </citation>
    <scope>NUCLEOTIDE SEQUENCE [LARGE SCALE MRNA] (ISOFORMS 1; 2 AND 3)</scope>
    <source>
        <tissue>Brain</tissue>
        <tissue>Eye</tissue>
        <tissue>Muscle</tissue>
        <tissue>Placenta</tissue>
        <tissue>Skin</tissue>
    </source>
</reference>
<reference key="5">
    <citation type="journal article" date="1997" name="DNA Res.">
        <title>Characterization of cDNA clones in size-fractionated cDNA libraries from human brain.</title>
        <authorList>
            <person name="Seki N."/>
            <person name="Ohira M."/>
            <person name="Nagase T."/>
            <person name="Ishikawa K."/>
            <person name="Miyajima N."/>
            <person name="Nakajima D."/>
            <person name="Nomura N."/>
            <person name="Ohara O."/>
        </authorList>
    </citation>
    <scope>NUCLEOTIDE SEQUENCE [LARGE SCALE MRNA] OF 565-929 (ISOFORM 1)</scope>
    <source>
        <tissue>Brain</tissue>
    </source>
</reference>
<reference key="6">
    <citation type="journal article" date="2004" name="Biochem. Biophys. Res. Commun.">
        <title>RIP5 is a RIP-homologous inducer of cell death.</title>
        <authorList>
            <person name="Zha J."/>
            <person name="Zhou Q."/>
            <person name="Xu L.G."/>
            <person name="Chen D."/>
            <person name="Li L."/>
            <person name="Zhai Z."/>
            <person name="Shu H.B."/>
        </authorList>
    </citation>
    <scope>FUNCTION</scope>
    <scope>TISSUE SPECIFICITY</scope>
    <scope>MUTAGENESIS OF LYS-681</scope>
</reference>
<reference key="7">
    <citation type="journal article" date="2009" name="Anal. Chem.">
        <title>Lys-N and trypsin cover complementary parts of the phosphoproteome in a refined SCX-based approach.</title>
        <authorList>
            <person name="Gauci S."/>
            <person name="Helbig A.O."/>
            <person name="Slijper M."/>
            <person name="Krijgsveld J."/>
            <person name="Heck A.J."/>
            <person name="Mohammed S."/>
        </authorList>
    </citation>
    <scope>IDENTIFICATION BY MASS SPECTROMETRY [LARGE SCALE ANALYSIS]</scope>
</reference>
<reference key="8">
    <citation type="journal article" date="2009" name="Mol. Cell. Proteomics">
        <title>Large-scale proteomics analysis of the human kinome.</title>
        <authorList>
            <person name="Oppermann F.S."/>
            <person name="Gnad F."/>
            <person name="Olsen J.V."/>
            <person name="Hornberger R."/>
            <person name="Greff Z."/>
            <person name="Keri G."/>
            <person name="Mann M."/>
            <person name="Daub H."/>
        </authorList>
    </citation>
    <scope>IDENTIFICATION BY MASS SPECTROMETRY [LARGE SCALE ANALYSIS]</scope>
</reference>
<reference key="9">
    <citation type="journal article" date="2013" name="N. Engl. J. Med.">
        <title>Mutations in DSTYK and dominant urinary tract malformations.</title>
        <authorList>
            <person name="Sanna-Cherchi S."/>
            <person name="Sampogna R.V."/>
            <person name="Papeta N."/>
            <person name="Burgess K.E."/>
            <person name="Nees S.N."/>
            <person name="Perry B.J."/>
            <person name="Choi M."/>
            <person name="Bodria M."/>
            <person name="Liu Y."/>
            <person name="Weng P.L."/>
            <person name="Lozanovski V.J."/>
            <person name="Verbitsky M."/>
            <person name="Lugani F."/>
            <person name="Sterken R."/>
            <person name="Paragas N."/>
            <person name="Caridi G."/>
            <person name="Carrea A."/>
            <person name="Dagnino M."/>
            <person name="Materna-Kiryluk A."/>
            <person name="Santamaria G."/>
            <person name="Murtas C."/>
            <person name="Ristoska-Bojkovska N."/>
            <person name="Izzi C."/>
            <person name="Kacak N."/>
            <person name="Bianco B."/>
            <person name="Giberti S."/>
            <person name="Gigante M."/>
            <person name="Piaggio G."/>
            <person name="Gesualdo L."/>
            <person name="Kosuljandic Vukic D."/>
            <person name="Vukojevic K."/>
            <person name="Saraga-Babic M."/>
            <person name="Saraga M."/>
            <person name="Gucev Z."/>
            <person name="Allegri L."/>
            <person name="Latos-Bielenska A."/>
            <person name="Casu D."/>
            <person name="State M."/>
            <person name="Scolari F."/>
            <person name="Ravazzolo R."/>
            <person name="Kiryluk K."/>
            <person name="Al-Awqati Q."/>
            <person name="D'Agati V.D."/>
            <person name="Drummond I.A."/>
            <person name="Tasic V."/>
            <person name="Lifton R.P."/>
            <person name="Ghiggeri G.M."/>
            <person name="Gharavi A.G."/>
        </authorList>
    </citation>
    <scope>INVOLVEMENT IN CAKUT1</scope>
    <scope>VARIANTS CAKUT1 GLN-29; GLY-200 AND LEU-843</scope>
    <scope>FUNCTION</scope>
    <scope>SUBCELLULAR LOCATION</scope>
    <scope>TISSUE SPECIFICITY</scope>
</reference>
<reference key="10">
    <citation type="journal article" date="2017" name="Am. J. Hum. Genet.">
        <title>Large intragenic deletion in DSTYK underlies autosomal-recessive complicated spastic paraparesis, SPG23.</title>
        <authorList>
            <person name="Lee J.Y."/>
            <person name="Hsu C.K."/>
            <person name="Michael M."/>
            <person name="Nanda A."/>
            <person name="Liu L."/>
            <person name="McMillan J.R."/>
            <person name="Pourreyron C."/>
            <person name="Takeichi T."/>
            <person name="Tolar J."/>
            <person name="Reid E."/>
            <person name="Hayday T."/>
            <person name="Blumen S.C."/>
            <person name="Abu-Mouch S."/>
            <person name="Straussberg R."/>
            <person name="Basel-Vanagaite L."/>
            <person name="Barhum Y."/>
            <person name="Zouabi Y."/>
            <person name="Al-Ajmi H."/>
            <person name="Huang H.Y."/>
            <person name="Lin T.C."/>
            <person name="Akiyama M."/>
            <person name="Lee J.Y."/>
            <person name="McLean W.H."/>
            <person name="Simpson M.A."/>
            <person name="Parsons M."/>
            <person name="McGrath J.A."/>
        </authorList>
    </citation>
    <scope>FUNCTION</scope>
    <scope>TISSUE SPECIFICITY</scope>
    <scope>INVOLVEMENT IN SPG23</scope>
</reference>
<comment type="function">
    <text evidence="6 8 9">Acts as a positive regulator of ERK phosphorylation downstream of fibroblast growth factor-receptor activation (PubMed:23862974, PubMed:28157540). Involved in the regulation of both caspase-dependent apoptosis and caspase-independent cell death (PubMed:15178406). In the skin, it plays a predominant role in suppressing caspase-dependent apoptosis in response to UV stress in a range of dermal cell types (PubMed:28157540).</text>
</comment>
<comment type="catalytic activity">
    <reaction>
        <text>L-seryl-[protein] + ATP = O-phospho-L-seryl-[protein] + ADP + H(+)</text>
        <dbReference type="Rhea" id="RHEA:17989"/>
        <dbReference type="Rhea" id="RHEA-COMP:9863"/>
        <dbReference type="Rhea" id="RHEA-COMP:11604"/>
        <dbReference type="ChEBI" id="CHEBI:15378"/>
        <dbReference type="ChEBI" id="CHEBI:29999"/>
        <dbReference type="ChEBI" id="CHEBI:30616"/>
        <dbReference type="ChEBI" id="CHEBI:83421"/>
        <dbReference type="ChEBI" id="CHEBI:456216"/>
        <dbReference type="EC" id="2.7.12.1"/>
    </reaction>
</comment>
<comment type="catalytic activity">
    <reaction>
        <text>L-threonyl-[protein] + ATP = O-phospho-L-threonyl-[protein] + ADP + H(+)</text>
        <dbReference type="Rhea" id="RHEA:46608"/>
        <dbReference type="Rhea" id="RHEA-COMP:11060"/>
        <dbReference type="Rhea" id="RHEA-COMP:11605"/>
        <dbReference type="ChEBI" id="CHEBI:15378"/>
        <dbReference type="ChEBI" id="CHEBI:30013"/>
        <dbReference type="ChEBI" id="CHEBI:30616"/>
        <dbReference type="ChEBI" id="CHEBI:61977"/>
        <dbReference type="ChEBI" id="CHEBI:456216"/>
        <dbReference type="EC" id="2.7.12.1"/>
    </reaction>
</comment>
<comment type="catalytic activity">
    <reaction>
        <text>L-tyrosyl-[protein] + ATP = O-phospho-L-tyrosyl-[protein] + ADP + H(+)</text>
        <dbReference type="Rhea" id="RHEA:10596"/>
        <dbReference type="Rhea" id="RHEA-COMP:10136"/>
        <dbReference type="Rhea" id="RHEA-COMP:20101"/>
        <dbReference type="ChEBI" id="CHEBI:15378"/>
        <dbReference type="ChEBI" id="CHEBI:30616"/>
        <dbReference type="ChEBI" id="CHEBI:46858"/>
        <dbReference type="ChEBI" id="CHEBI:61978"/>
        <dbReference type="ChEBI" id="CHEBI:456216"/>
        <dbReference type="EC" id="2.7.12.1"/>
    </reaction>
</comment>
<comment type="interaction">
    <interactant intactId="EBI-1049520">
        <id>Q6XUX3</id>
    </interactant>
    <interactant intactId="EBI-356498">
        <id>P62258</id>
        <label>YWHAE</label>
    </interactant>
    <organismsDiffer>false</organismsDiffer>
    <experiments>2</experiments>
</comment>
<comment type="subcellular location">
    <subcellularLocation>
        <location evidence="7 8">Cytoplasm</location>
    </subcellularLocation>
    <subcellularLocation>
        <location evidence="1">Cell membrane</location>
    </subcellularLocation>
    <subcellularLocation>
        <location evidence="8">Apical cell membrane</location>
    </subcellularLocation>
    <subcellularLocation>
        <location evidence="8">Basolateral cell membrane</location>
    </subcellularLocation>
    <subcellularLocation>
        <location evidence="1">Cell junction</location>
    </subcellularLocation>
    <text evidence="1 8">Detected at apical cell-cell junctions. Colocalized with FGF receptors to the cell membrane (By similarity). Detected in basolateral and apical membranes of all tubular epithelia.</text>
</comment>
<comment type="alternative products">
    <event type="alternative splicing"/>
    <isoform>
        <id>Q6XUX3-1</id>
        <name>1</name>
        <sequence type="displayed"/>
    </isoform>
    <isoform>
        <id>Q6XUX3-2</id>
        <name>2</name>
        <sequence type="described" ref="VSP_018034"/>
    </isoform>
    <isoform>
        <id>Q6XUX3-3</id>
        <name>3</name>
        <sequence type="described" ref="VSP_018031"/>
    </isoform>
    <isoform>
        <id>Q6XUX3-4</id>
        <name>4</name>
        <sequence type="described" ref="VSP_018030 VSP_018032 VSP_018033"/>
    </isoform>
</comment>
<comment type="tissue specificity">
    <text evidence="6 7 8 9">Predominantly expressed in skeletal muscle and testis. Expressed in basolateral and apical membranes of all tubular epithelia. Expressed in thin ascending limb of the loop of Henle and the distal convoluted tubule. Expressed in all layers of transitional ureteric epithelium and in the ureteric smooth-muscle cells. Weakly expressed in heart, brain, placenta, kidney, pancreas, spleen, thymus, prostate, uterus, small intestine, white blood cells, stomach, spinal cord and adrenal gland. Is widely distributed in the CNS. Also detected in several tumor cell lines. Expressed in the skin (PubMed:28157540).</text>
</comment>
<comment type="disease" evidence="8">
    <disease id="DI-04107">
        <name>Congenital anomalies of the kidney and urinary tract 1</name>
        <acronym>CAKUT1</acronym>
        <description>A disorder encompassing a broad spectrum of renal and urinary tract malformations that include renal agenesis, kidney hypodysplasia, multicystic kidney dysplasia, duplex collecting system, posterior urethral valves and ureter abnormalities. Congenital anomalies of kidney and urinary tract are the commonest cause of chronic kidney disease in children.</description>
        <dbReference type="MIM" id="610805"/>
    </disease>
    <text>Disease susceptibility is associated with variants affecting the gene represented in this entry.</text>
</comment>
<comment type="disease" evidence="9">
    <disease id="DI-04976">
        <name>Spastic paraplegia 23, autosomal recessive</name>
        <acronym>SPG23</acronym>
        <description>A form of spastic paraplegia, a neurodegenerative disorder characterized by a slow, gradual, progressive weakness and spasticity of the lower limbs. Rate of progression and the severity of symptoms are quite variable. Initial symptoms may include difficulty with balance, weakness and stiffness in the legs, muscle spasms, and dragging the toes when walking. In some forms of the disorder, bladder symptoms (such as incontinence) may appear, or the weakness and stiffness may spread to other parts of the body. SPG23 is an autosomal recessive form characterized by childhood-onset of gait difficulties and pigmentary abnormalities, including premature graying of the hair and vitiligo-like or hyperpigmented skin lesions.</description>
        <dbReference type="MIM" id="270750"/>
    </disease>
    <text>The disease is caused by variants affecting the gene represented in this entry.</text>
</comment>
<comment type="similarity">
    <text evidence="3">Belongs to the protein kinase superfamily. Ser/Thr protein kinase family.</text>
</comment>
<keyword id="KW-0025">Alternative splicing</keyword>
<keyword id="KW-0067">ATP-binding</keyword>
<keyword id="KW-0965">Cell junction</keyword>
<keyword id="KW-1003">Cell membrane</keyword>
<keyword id="KW-0175">Coiled coil</keyword>
<keyword id="KW-0963">Cytoplasm</keyword>
<keyword id="KW-0225">Disease variant</keyword>
<keyword id="KW-0890">Hereditary spastic paraplegia</keyword>
<keyword id="KW-0418">Kinase</keyword>
<keyword id="KW-0472">Membrane</keyword>
<keyword id="KW-0523">Neurodegeneration</keyword>
<keyword id="KW-0547">Nucleotide-binding</keyword>
<keyword id="KW-1267">Proteomics identification</keyword>
<keyword id="KW-1185">Reference proteome</keyword>
<keyword id="KW-0723">Serine/threonine-protein kinase</keyword>
<keyword id="KW-0808">Transferase</keyword>
<keyword id="KW-0829">Tyrosine-protein kinase</keyword>
<proteinExistence type="evidence at protein level"/>
<protein>
    <recommendedName>
        <fullName>Dual serine/threonine and tyrosine protein kinase</fullName>
        <ecNumber>2.7.12.1</ecNumber>
    </recommendedName>
    <alternativeName>
        <fullName>Dusty protein kinase</fullName>
        <shortName>Dusty PK</shortName>
    </alternativeName>
    <alternativeName>
        <fullName>RIP-homologous kinase</fullName>
    </alternativeName>
    <alternativeName>
        <fullName>Receptor-interacting serine/threonine-protein kinase 5</fullName>
    </alternativeName>
    <alternativeName>
        <fullName>Sugen kinase 496</fullName>
        <shortName>SgK496</shortName>
    </alternativeName>
</protein>
<sequence>MEGDGVPWGSEPVSGPGPGGGGMIRELCRGFGRYRRYLGRLRQNLRETQKFFRDIKCSHNHTCLSSLTGGGGAERGPAGDVAETGLQAGQLSCISFPPKEEKYLQQIVDCLPCILILGQDCNVKCQLLNLLLGVQVLPTTKLGSEESCKLRRLRFTYGTQTRVSLALPGQYELVHTLVAHQGNWETIPEEDLEVQENNEDAAHVLAELEVTMHHALLQEVDVVVAPCQGLRPTVDVLGDLVNDFLPVITYALHKDELSERDEQELQEIRKYFSFPVFFFKVPKLGSEIIDSSTRRMESERSPLYRQLIDLGYLSSSHWNCGAPGQDTKAQSMLVEQSEKLRHLSTFSHQVLQTRLVDAAKALNLVHCHCLDIFINQAFDMQRDLQITPKRLEYTRKKENELYESLMNIANRKQEEMKDMIVETLNTMKEELLDDATNMEFKDVIVPENGEPVGTREIKCCIRQIQELIISRLNQAVANKLISSVDYLRESFVGTLERCLQSLEKSQDVSVHITSNYLKQILNAAYHVEVTFHSGSSVTRMLWEQIKQIIQRITWVSPPAITLEWKRKVAQEAIESLSASKLAKSICSQFRTRLNSSHEAFAASLRQLEAGHSGRLEKTEDLWLRVRKDHAPRLARLSLESCSLQDVLLHRKPKLGQELGRGQYGVVYLCDNWGGHFPCALKSVVPPDEKHWNDLALEFHYMRSLPKHERLVDLHGSVIDYNYGGGSSIAVLLIMERLHRDLYTGLKAGLTLETRLQIALDVVEGIRFLHSQGLVHRDIKLKNVLLDKQNRAKITDLGFCKPEAMMSGSIVGTPIHMAPELFTGKYDNSVDVYAFGILFWYICSGSVKLPEAFERCASKDHLWNNVRRGARPERLPVFDEECWQLMEACWDGDPLKRPLLGIVQPMLQGIMNRLCKSNSEQPNRGLDDST</sequence>
<accession>Q6XUX3</accession>
<accession>B7ZL64</accession>
<accession>O75060</accession>
<accession>Q17R94</accession>
<accession>Q5RKT0</accession>
<accession>Q6IN87</accession>
<accession>Q6P997</accession>
<accession>Q86Y03</accession>
<accession>Q9P1S5</accession>
<organism>
    <name type="scientific">Homo sapiens</name>
    <name type="common">Human</name>
    <dbReference type="NCBI Taxonomy" id="9606"/>
    <lineage>
        <taxon>Eukaryota</taxon>
        <taxon>Metazoa</taxon>
        <taxon>Chordata</taxon>
        <taxon>Craniata</taxon>
        <taxon>Vertebrata</taxon>
        <taxon>Euteleostomi</taxon>
        <taxon>Mammalia</taxon>
        <taxon>Eutheria</taxon>
        <taxon>Euarchontoglires</taxon>
        <taxon>Primates</taxon>
        <taxon>Haplorrhini</taxon>
        <taxon>Catarrhini</taxon>
        <taxon>Hominidae</taxon>
        <taxon>Homo</taxon>
    </lineage>
</organism>